<comment type="function">
    <text evidence="1">Na(+)/H(+) antiporter that extrudes sodium in exchange for external protons.</text>
</comment>
<comment type="catalytic activity">
    <reaction evidence="1">
        <text>Na(+)(in) + 2 H(+)(out) = Na(+)(out) + 2 H(+)(in)</text>
        <dbReference type="Rhea" id="RHEA:29251"/>
        <dbReference type="ChEBI" id="CHEBI:15378"/>
        <dbReference type="ChEBI" id="CHEBI:29101"/>
    </reaction>
    <physiologicalReaction direction="left-to-right" evidence="1">
        <dbReference type="Rhea" id="RHEA:29252"/>
    </physiologicalReaction>
</comment>
<comment type="subcellular location">
    <subcellularLocation>
        <location evidence="1">Cell inner membrane</location>
        <topology evidence="1">Multi-pass membrane protein</topology>
    </subcellularLocation>
</comment>
<comment type="similarity">
    <text evidence="1">Belongs to the NhaA Na(+)/H(+) (TC 2.A.33) antiporter family.</text>
</comment>
<feature type="chain" id="PRO_0000334298" description="Na(+)/H(+) antiporter NhaA">
    <location>
        <begin position="1"/>
        <end position="383"/>
    </location>
</feature>
<feature type="transmembrane region" description="Helical" evidence="1">
    <location>
        <begin position="10"/>
        <end position="30"/>
    </location>
</feature>
<feature type="transmembrane region" description="Helical" evidence="1">
    <location>
        <begin position="56"/>
        <end position="76"/>
    </location>
</feature>
<feature type="transmembrane region" description="Helical" evidence="1">
    <location>
        <begin position="91"/>
        <end position="111"/>
    </location>
</feature>
<feature type="transmembrane region" description="Helical" evidence="1">
    <location>
        <begin position="121"/>
        <end position="141"/>
    </location>
</feature>
<feature type="transmembrane region" description="Helical" evidence="1">
    <location>
        <begin position="150"/>
        <end position="170"/>
    </location>
</feature>
<feature type="transmembrane region" description="Helical" evidence="1">
    <location>
        <begin position="174"/>
        <end position="194"/>
    </location>
</feature>
<feature type="transmembrane region" description="Helical" evidence="1">
    <location>
        <begin position="206"/>
        <end position="226"/>
    </location>
</feature>
<feature type="transmembrane region" description="Helical" evidence="1">
    <location>
        <begin position="254"/>
        <end position="274"/>
    </location>
</feature>
<feature type="transmembrane region" description="Helical" evidence="1">
    <location>
        <begin position="289"/>
        <end position="308"/>
    </location>
</feature>
<feature type="transmembrane region" description="Helical" evidence="1">
    <location>
        <begin position="327"/>
        <end position="347"/>
    </location>
</feature>
<feature type="transmembrane region" description="Helical" evidence="1">
    <location>
        <begin position="355"/>
        <end position="375"/>
    </location>
</feature>
<reference key="1">
    <citation type="journal article" date="2005" name="Nat. Genet.">
        <title>The complete genome sequence of Francisella tularensis, the causative agent of tularemia.</title>
        <authorList>
            <person name="Larsson P."/>
            <person name="Oyston P.C.F."/>
            <person name="Chain P."/>
            <person name="Chu M.C."/>
            <person name="Duffield M."/>
            <person name="Fuxelius H.-H."/>
            <person name="Garcia E."/>
            <person name="Haelltorp G."/>
            <person name="Johansson D."/>
            <person name="Isherwood K.E."/>
            <person name="Karp P.D."/>
            <person name="Larsson E."/>
            <person name="Liu Y."/>
            <person name="Michell S."/>
            <person name="Prior J."/>
            <person name="Prior R."/>
            <person name="Malfatti S."/>
            <person name="Sjoestedt A."/>
            <person name="Svensson K."/>
            <person name="Thompson N."/>
            <person name="Vergez L."/>
            <person name="Wagg J.K."/>
            <person name="Wren B.W."/>
            <person name="Lindler L.E."/>
            <person name="Andersson S.G.E."/>
            <person name="Forsman M."/>
            <person name="Titball R.W."/>
        </authorList>
    </citation>
    <scope>NUCLEOTIDE SEQUENCE [LARGE SCALE GENOMIC DNA]</scope>
    <source>
        <strain>SCHU S4 / Schu 4</strain>
    </source>
</reference>
<proteinExistence type="inferred from homology"/>
<keyword id="KW-0050">Antiport</keyword>
<keyword id="KW-0997">Cell inner membrane</keyword>
<keyword id="KW-1003">Cell membrane</keyword>
<keyword id="KW-0406">Ion transport</keyword>
<keyword id="KW-0472">Membrane</keyword>
<keyword id="KW-1185">Reference proteome</keyword>
<keyword id="KW-0915">Sodium</keyword>
<keyword id="KW-0739">Sodium transport</keyword>
<keyword id="KW-0812">Transmembrane</keyword>
<keyword id="KW-1133">Transmembrane helix</keyword>
<keyword id="KW-0813">Transport</keyword>
<name>NHAA_FRATT</name>
<gene>
    <name evidence="1" type="primary">nhaA</name>
    <name type="ordered locus">FTT_1760</name>
</gene>
<sequence length="383" mass="41742">MGASQKNQELIGGLILFSAALLAIVVNNSPLASYYAMLETINVKLGIENLVIDKNLMHWINDGLMAIYFLYIGLEIKREIIVGTLSKPSNIITPAIAAFAGLAMPSLIYLSINHDIKVINGWAIPSATDIAFTLGILALLGTRVPAKLKLLVITIAIFDDIAAIAIIAIFYTKSLSLLSLSLGTLFILAMIICNRIFKINRSSVYVVLGFFAWFCTIKSGVHATLAGFTTALCIPFRENDKDSPANFMEDSLHPWIIYFILPVFAFANAGISFSGISFSILFEPITLGIIWGLFVGKQLGIFSILAVFKKLKWFKLGESFSNLQLYGISLLCGIGFTMSLFIGVLAFNDTHLLNAIKIGVVVGSVLSGFFGYIVLRFIVTNPS</sequence>
<dbReference type="EMBL" id="AJ749949">
    <property type="protein sequence ID" value="CAG46393.1"/>
    <property type="molecule type" value="Genomic_DNA"/>
</dbReference>
<dbReference type="RefSeq" id="WP_003022784.1">
    <property type="nucleotide sequence ID" value="NC_006570.2"/>
</dbReference>
<dbReference type="RefSeq" id="YP_170651.1">
    <property type="nucleotide sequence ID" value="NC_006570.2"/>
</dbReference>
<dbReference type="SMR" id="Q5NE91"/>
<dbReference type="STRING" id="177416.FTT_1760"/>
<dbReference type="DNASU" id="3191689"/>
<dbReference type="EnsemblBacteria" id="CAG46393">
    <property type="protein sequence ID" value="CAG46393"/>
    <property type="gene ID" value="FTT_1760"/>
</dbReference>
<dbReference type="KEGG" id="ftu:FTT_1760"/>
<dbReference type="eggNOG" id="COG3004">
    <property type="taxonomic scope" value="Bacteria"/>
</dbReference>
<dbReference type="OrthoDB" id="9808135at2"/>
<dbReference type="Proteomes" id="UP000001174">
    <property type="component" value="Chromosome"/>
</dbReference>
<dbReference type="GO" id="GO:0005886">
    <property type="term" value="C:plasma membrane"/>
    <property type="evidence" value="ECO:0007669"/>
    <property type="project" value="UniProtKB-SubCell"/>
</dbReference>
<dbReference type="GO" id="GO:0015385">
    <property type="term" value="F:sodium:proton antiporter activity"/>
    <property type="evidence" value="ECO:0007669"/>
    <property type="project" value="TreeGrafter"/>
</dbReference>
<dbReference type="GO" id="GO:0006885">
    <property type="term" value="P:regulation of pH"/>
    <property type="evidence" value="ECO:0007669"/>
    <property type="project" value="InterPro"/>
</dbReference>
<dbReference type="Gene3D" id="1.20.1530.10">
    <property type="entry name" value="Na+/H+ antiporter like domain"/>
    <property type="match status" value="1"/>
</dbReference>
<dbReference type="HAMAP" id="MF_01844">
    <property type="entry name" value="NhaA"/>
    <property type="match status" value="1"/>
</dbReference>
<dbReference type="InterPro" id="IPR023171">
    <property type="entry name" value="Na/H_antiporter_dom_sf"/>
</dbReference>
<dbReference type="InterPro" id="IPR004670">
    <property type="entry name" value="NhaA"/>
</dbReference>
<dbReference type="NCBIfam" id="TIGR00773">
    <property type="entry name" value="NhaA"/>
    <property type="match status" value="1"/>
</dbReference>
<dbReference type="NCBIfam" id="NF007111">
    <property type="entry name" value="PRK09560.1"/>
    <property type="match status" value="1"/>
</dbReference>
<dbReference type="NCBIfam" id="NF007112">
    <property type="entry name" value="PRK09561.1"/>
    <property type="match status" value="1"/>
</dbReference>
<dbReference type="NCBIfam" id="NF011427">
    <property type="entry name" value="PRK14854.1"/>
    <property type="match status" value="1"/>
</dbReference>
<dbReference type="PANTHER" id="PTHR30341:SF0">
    <property type="entry name" value="NA(+)_H(+) ANTIPORTER NHAA"/>
    <property type="match status" value="1"/>
</dbReference>
<dbReference type="PANTHER" id="PTHR30341">
    <property type="entry name" value="SODIUM ION/PROTON ANTIPORTER NHAA-RELATED"/>
    <property type="match status" value="1"/>
</dbReference>
<dbReference type="Pfam" id="PF06965">
    <property type="entry name" value="Na_H_antiport_1"/>
    <property type="match status" value="1"/>
</dbReference>
<protein>
    <recommendedName>
        <fullName evidence="1">Na(+)/H(+) antiporter NhaA</fullName>
    </recommendedName>
    <alternativeName>
        <fullName evidence="1">Sodium/proton antiporter NhaA</fullName>
    </alternativeName>
</protein>
<accession>Q5NE91</accession>
<evidence type="ECO:0000255" key="1">
    <source>
        <dbReference type="HAMAP-Rule" id="MF_01844"/>
    </source>
</evidence>
<organism>
    <name type="scientific">Francisella tularensis subsp. tularensis (strain SCHU S4 / Schu 4)</name>
    <dbReference type="NCBI Taxonomy" id="177416"/>
    <lineage>
        <taxon>Bacteria</taxon>
        <taxon>Pseudomonadati</taxon>
        <taxon>Pseudomonadota</taxon>
        <taxon>Gammaproteobacteria</taxon>
        <taxon>Thiotrichales</taxon>
        <taxon>Francisellaceae</taxon>
        <taxon>Francisella</taxon>
    </lineage>
</organism>